<feature type="chain" id="PRO_0000217896" description="Photosystem II reaction center protein T">
    <location>
        <begin position="1"/>
        <end position="33"/>
    </location>
</feature>
<feature type="transmembrane region" description="Helical" evidence="1">
    <location>
        <begin position="3"/>
        <end position="23"/>
    </location>
</feature>
<comment type="function">
    <text evidence="1">Found at the monomer-monomer interface of the photosystem II (PS II) dimer, plays a role in assembly and dimerization of PSII. PSII is a light-driven water plastoquinone oxidoreductase, using light energy to abstract electrons from H(2)O, generating a proton gradient subsequently used for ATP formation.</text>
</comment>
<comment type="subunit">
    <text evidence="1">PSII is composed of 1 copy each of membrane proteins PsbA, PsbB, PsbC, PsbD, PsbE, PsbF, PsbH, PsbI, PsbJ, PsbK, PsbL, PsbM, PsbT, PsbY, PsbZ, Psb30/Ycf12, at least 3 peripheral proteins of the oxygen-evolving complex and a large number of cofactors. It forms dimeric complexes.</text>
</comment>
<comment type="subcellular location">
    <subcellularLocation>
        <location evidence="1">Plastid</location>
        <location evidence="1">Chloroplast thylakoid membrane</location>
        <topology evidence="1">Single-pass membrane protein</topology>
    </subcellularLocation>
</comment>
<comment type="similarity">
    <text evidence="1">Belongs to the PsbT family.</text>
</comment>
<organism>
    <name type="scientific">Allium textile</name>
    <name type="common">Textile onion</name>
    <name type="synonym">Allium reticulatum</name>
    <dbReference type="NCBI Taxonomy" id="207935"/>
    <lineage>
        <taxon>Eukaryota</taxon>
        <taxon>Viridiplantae</taxon>
        <taxon>Streptophyta</taxon>
        <taxon>Embryophyta</taxon>
        <taxon>Tracheophyta</taxon>
        <taxon>Spermatophyta</taxon>
        <taxon>Magnoliopsida</taxon>
        <taxon>Liliopsida</taxon>
        <taxon>Asparagales</taxon>
        <taxon>Amaryllidaceae</taxon>
        <taxon>Allioideae</taxon>
        <taxon>Allieae</taxon>
        <taxon>Allium</taxon>
    </lineage>
</organism>
<reference key="1">
    <citation type="submission" date="2002-09" db="EMBL/GenBank/DDBJ databases">
        <title>Phylogenetic relationships among the major lineages of Asparagales based on a large chloroplast data set.</title>
        <authorList>
            <person name="McPherson M.A."/>
            <person name="Rai H.S."/>
            <person name="Wong W.A."/>
            <person name="Graham S.W."/>
        </authorList>
    </citation>
    <scope>NUCLEOTIDE SEQUENCE [GENOMIC DNA]</scope>
</reference>
<dbReference type="EMBL" id="AY147536">
    <property type="protein sequence ID" value="AAN32245.1"/>
    <property type="molecule type" value="Genomic_DNA"/>
</dbReference>
<dbReference type="SMR" id="Q67HV9"/>
<dbReference type="GO" id="GO:0009535">
    <property type="term" value="C:chloroplast thylakoid membrane"/>
    <property type="evidence" value="ECO:0007669"/>
    <property type="project" value="UniProtKB-SubCell"/>
</dbReference>
<dbReference type="GO" id="GO:0009539">
    <property type="term" value="C:photosystem II reaction center"/>
    <property type="evidence" value="ECO:0007669"/>
    <property type="project" value="InterPro"/>
</dbReference>
<dbReference type="GO" id="GO:0015979">
    <property type="term" value="P:photosynthesis"/>
    <property type="evidence" value="ECO:0007669"/>
    <property type="project" value="UniProtKB-UniRule"/>
</dbReference>
<dbReference type="HAMAP" id="MF_00808">
    <property type="entry name" value="PSII_PsbT"/>
    <property type="match status" value="1"/>
</dbReference>
<dbReference type="InterPro" id="IPR001743">
    <property type="entry name" value="PSII_PsbT"/>
</dbReference>
<dbReference type="InterPro" id="IPR037268">
    <property type="entry name" value="PSII_PsbT_sf"/>
</dbReference>
<dbReference type="PANTHER" id="PTHR36411">
    <property type="match status" value="1"/>
</dbReference>
<dbReference type="PANTHER" id="PTHR36411:SF2">
    <property type="entry name" value="PHOTOSYSTEM II REACTION CENTER PROTEIN T"/>
    <property type="match status" value="1"/>
</dbReference>
<dbReference type="Pfam" id="PF01405">
    <property type="entry name" value="PsbT"/>
    <property type="match status" value="1"/>
</dbReference>
<dbReference type="SUPFAM" id="SSF161029">
    <property type="entry name" value="Photosystem II reaction center protein T, PsbT"/>
    <property type="match status" value="1"/>
</dbReference>
<gene>
    <name evidence="1" type="primary">psbT</name>
</gene>
<protein>
    <recommendedName>
        <fullName evidence="1">Photosystem II reaction center protein T</fullName>
        <shortName evidence="1">PSII-T</shortName>
    </recommendedName>
</protein>
<accession>Q67HV9</accession>
<name>PSBT_ALLTE</name>
<geneLocation type="chloroplast"/>
<proteinExistence type="inferred from homology"/>
<sequence length="33" mass="3818">MEALVYTFLLVSTLGIIFFAIFFREPPKVPTKK</sequence>
<keyword id="KW-0150">Chloroplast</keyword>
<keyword id="KW-0472">Membrane</keyword>
<keyword id="KW-0602">Photosynthesis</keyword>
<keyword id="KW-0604">Photosystem II</keyword>
<keyword id="KW-0934">Plastid</keyword>
<keyword id="KW-0793">Thylakoid</keyword>
<keyword id="KW-0812">Transmembrane</keyword>
<keyword id="KW-1133">Transmembrane helix</keyword>
<evidence type="ECO:0000255" key="1">
    <source>
        <dbReference type="HAMAP-Rule" id="MF_00808"/>
    </source>
</evidence>